<sequence>MLKREMNIADYDPELWNAMEGEVTRQEEHIELIASENYTSPRVMQAQGSQLTNKYAEGYPGKRYYGGCEYVDVVEQLAIDRAKALFGADYANVQPHSGSQANAAVYMALLKPGDTVLGMNLAQGGHLTHGSPVNFSGKLYNIVPYGIDEAGKIDYQDIAEQAKKHKPKMIIGGFSAYSGLVDWAKMREIADSVGAYLFVDMAHVAGMIAAGVYPNPVPHAHVVTTTTHKTLAGPRGGLILAKGGDEEFYKKLNSAVFPGSQGGPLMHVIAGKAVALKEAMEPEFKVYQQQVAKNAKAMVDVFLARGYKVVSGGTENHLFLLDLVDKDITGKDADAALGRANITVNKNSVPNDPRSPFVTSGIRIGSPAITRRGFKEAEAKDLAGWMCDVLDNINDEANIEKVKQKVLDICAKFPVYA</sequence>
<dbReference type="EC" id="2.1.2.1" evidence="1"/>
<dbReference type="EMBL" id="AM942759">
    <property type="protein sequence ID" value="CAR43871.1"/>
    <property type="molecule type" value="Genomic_DNA"/>
</dbReference>
<dbReference type="RefSeq" id="WP_004243862.1">
    <property type="nucleotide sequence ID" value="NC_010554.1"/>
</dbReference>
<dbReference type="SMR" id="B4EZV5"/>
<dbReference type="EnsemblBacteria" id="CAR43871">
    <property type="protein sequence ID" value="CAR43871"/>
    <property type="gene ID" value="PMI1867"/>
</dbReference>
<dbReference type="GeneID" id="6801448"/>
<dbReference type="KEGG" id="pmr:PMI1867"/>
<dbReference type="eggNOG" id="COG0112">
    <property type="taxonomic scope" value="Bacteria"/>
</dbReference>
<dbReference type="HOGENOM" id="CLU_022477_2_1_6"/>
<dbReference type="UniPathway" id="UPA00193"/>
<dbReference type="UniPathway" id="UPA00288">
    <property type="reaction ID" value="UER01023"/>
</dbReference>
<dbReference type="Proteomes" id="UP000008319">
    <property type="component" value="Chromosome"/>
</dbReference>
<dbReference type="GO" id="GO:0005829">
    <property type="term" value="C:cytosol"/>
    <property type="evidence" value="ECO:0007669"/>
    <property type="project" value="TreeGrafter"/>
</dbReference>
<dbReference type="GO" id="GO:0004372">
    <property type="term" value="F:glycine hydroxymethyltransferase activity"/>
    <property type="evidence" value="ECO:0007669"/>
    <property type="project" value="UniProtKB-UniRule"/>
</dbReference>
<dbReference type="GO" id="GO:0030170">
    <property type="term" value="F:pyridoxal phosphate binding"/>
    <property type="evidence" value="ECO:0007669"/>
    <property type="project" value="UniProtKB-UniRule"/>
</dbReference>
<dbReference type="GO" id="GO:0019264">
    <property type="term" value="P:glycine biosynthetic process from serine"/>
    <property type="evidence" value="ECO:0007669"/>
    <property type="project" value="UniProtKB-UniRule"/>
</dbReference>
<dbReference type="GO" id="GO:0035999">
    <property type="term" value="P:tetrahydrofolate interconversion"/>
    <property type="evidence" value="ECO:0007669"/>
    <property type="project" value="UniProtKB-UniRule"/>
</dbReference>
<dbReference type="CDD" id="cd00378">
    <property type="entry name" value="SHMT"/>
    <property type="match status" value="1"/>
</dbReference>
<dbReference type="FunFam" id="3.40.640.10:FF:000001">
    <property type="entry name" value="Serine hydroxymethyltransferase"/>
    <property type="match status" value="1"/>
</dbReference>
<dbReference type="FunFam" id="3.90.1150.10:FF:000003">
    <property type="entry name" value="Serine hydroxymethyltransferase"/>
    <property type="match status" value="1"/>
</dbReference>
<dbReference type="Gene3D" id="3.90.1150.10">
    <property type="entry name" value="Aspartate Aminotransferase, domain 1"/>
    <property type="match status" value="1"/>
</dbReference>
<dbReference type="Gene3D" id="3.40.640.10">
    <property type="entry name" value="Type I PLP-dependent aspartate aminotransferase-like (Major domain)"/>
    <property type="match status" value="1"/>
</dbReference>
<dbReference type="HAMAP" id="MF_00051">
    <property type="entry name" value="SHMT"/>
    <property type="match status" value="1"/>
</dbReference>
<dbReference type="InterPro" id="IPR015424">
    <property type="entry name" value="PyrdxlP-dep_Trfase"/>
</dbReference>
<dbReference type="InterPro" id="IPR015421">
    <property type="entry name" value="PyrdxlP-dep_Trfase_major"/>
</dbReference>
<dbReference type="InterPro" id="IPR015422">
    <property type="entry name" value="PyrdxlP-dep_Trfase_small"/>
</dbReference>
<dbReference type="InterPro" id="IPR001085">
    <property type="entry name" value="Ser_HO-MeTrfase"/>
</dbReference>
<dbReference type="InterPro" id="IPR049943">
    <property type="entry name" value="Ser_HO-MeTrfase-like"/>
</dbReference>
<dbReference type="InterPro" id="IPR019798">
    <property type="entry name" value="Ser_HO-MeTrfase_PLP_BS"/>
</dbReference>
<dbReference type="InterPro" id="IPR039429">
    <property type="entry name" value="SHMT-like_dom"/>
</dbReference>
<dbReference type="NCBIfam" id="NF000586">
    <property type="entry name" value="PRK00011.1"/>
    <property type="match status" value="1"/>
</dbReference>
<dbReference type="PANTHER" id="PTHR11680">
    <property type="entry name" value="SERINE HYDROXYMETHYLTRANSFERASE"/>
    <property type="match status" value="1"/>
</dbReference>
<dbReference type="PANTHER" id="PTHR11680:SF50">
    <property type="entry name" value="SERINE HYDROXYMETHYLTRANSFERASE"/>
    <property type="match status" value="1"/>
</dbReference>
<dbReference type="Pfam" id="PF00464">
    <property type="entry name" value="SHMT"/>
    <property type="match status" value="1"/>
</dbReference>
<dbReference type="PIRSF" id="PIRSF000412">
    <property type="entry name" value="SHMT"/>
    <property type="match status" value="1"/>
</dbReference>
<dbReference type="SUPFAM" id="SSF53383">
    <property type="entry name" value="PLP-dependent transferases"/>
    <property type="match status" value="1"/>
</dbReference>
<dbReference type="PROSITE" id="PS00096">
    <property type="entry name" value="SHMT"/>
    <property type="match status" value="1"/>
</dbReference>
<accession>B4EZV5</accession>
<comment type="function">
    <text evidence="1">Catalyzes the reversible interconversion of serine and glycine with tetrahydrofolate (THF) serving as the one-carbon carrier. This reaction serves as the major source of one-carbon groups required for the biosynthesis of purines, thymidylate, methionine, and other important biomolecules. Also exhibits THF-independent aldolase activity toward beta-hydroxyamino acids, producing glycine and aldehydes, via a retro-aldol mechanism.</text>
</comment>
<comment type="catalytic activity">
    <reaction evidence="1">
        <text>(6R)-5,10-methylene-5,6,7,8-tetrahydrofolate + glycine + H2O = (6S)-5,6,7,8-tetrahydrofolate + L-serine</text>
        <dbReference type="Rhea" id="RHEA:15481"/>
        <dbReference type="ChEBI" id="CHEBI:15377"/>
        <dbReference type="ChEBI" id="CHEBI:15636"/>
        <dbReference type="ChEBI" id="CHEBI:33384"/>
        <dbReference type="ChEBI" id="CHEBI:57305"/>
        <dbReference type="ChEBI" id="CHEBI:57453"/>
        <dbReference type="EC" id="2.1.2.1"/>
    </reaction>
</comment>
<comment type="cofactor">
    <cofactor evidence="1">
        <name>pyridoxal 5'-phosphate</name>
        <dbReference type="ChEBI" id="CHEBI:597326"/>
    </cofactor>
</comment>
<comment type="pathway">
    <text evidence="1">One-carbon metabolism; tetrahydrofolate interconversion.</text>
</comment>
<comment type="pathway">
    <text evidence="1">Amino-acid biosynthesis; glycine biosynthesis; glycine from L-serine: step 1/1.</text>
</comment>
<comment type="subunit">
    <text evidence="1">Homodimer.</text>
</comment>
<comment type="subcellular location">
    <subcellularLocation>
        <location evidence="1">Cytoplasm</location>
    </subcellularLocation>
</comment>
<comment type="similarity">
    <text evidence="1">Belongs to the SHMT family.</text>
</comment>
<reference key="1">
    <citation type="journal article" date="2008" name="J. Bacteriol.">
        <title>Complete genome sequence of uropathogenic Proteus mirabilis, a master of both adherence and motility.</title>
        <authorList>
            <person name="Pearson M.M."/>
            <person name="Sebaihia M."/>
            <person name="Churcher C."/>
            <person name="Quail M.A."/>
            <person name="Seshasayee A.S."/>
            <person name="Luscombe N.M."/>
            <person name="Abdellah Z."/>
            <person name="Arrosmith C."/>
            <person name="Atkin B."/>
            <person name="Chillingworth T."/>
            <person name="Hauser H."/>
            <person name="Jagels K."/>
            <person name="Moule S."/>
            <person name="Mungall K."/>
            <person name="Norbertczak H."/>
            <person name="Rabbinowitsch E."/>
            <person name="Walker D."/>
            <person name="Whithead S."/>
            <person name="Thomson N.R."/>
            <person name="Rather P.N."/>
            <person name="Parkhill J."/>
            <person name="Mobley H.L.T."/>
        </authorList>
    </citation>
    <scope>NUCLEOTIDE SEQUENCE [LARGE SCALE GENOMIC DNA]</scope>
    <source>
        <strain>HI4320</strain>
    </source>
</reference>
<organism>
    <name type="scientific">Proteus mirabilis (strain HI4320)</name>
    <dbReference type="NCBI Taxonomy" id="529507"/>
    <lineage>
        <taxon>Bacteria</taxon>
        <taxon>Pseudomonadati</taxon>
        <taxon>Pseudomonadota</taxon>
        <taxon>Gammaproteobacteria</taxon>
        <taxon>Enterobacterales</taxon>
        <taxon>Morganellaceae</taxon>
        <taxon>Proteus</taxon>
    </lineage>
</organism>
<keyword id="KW-0028">Amino-acid biosynthesis</keyword>
<keyword id="KW-0963">Cytoplasm</keyword>
<keyword id="KW-0554">One-carbon metabolism</keyword>
<keyword id="KW-0663">Pyridoxal phosphate</keyword>
<keyword id="KW-1185">Reference proteome</keyword>
<keyword id="KW-0808">Transferase</keyword>
<evidence type="ECO:0000255" key="1">
    <source>
        <dbReference type="HAMAP-Rule" id="MF_00051"/>
    </source>
</evidence>
<feature type="chain" id="PRO_1000091570" description="Serine hydroxymethyltransferase">
    <location>
        <begin position="1"/>
        <end position="417"/>
    </location>
</feature>
<feature type="binding site" evidence="1">
    <location>
        <position position="121"/>
    </location>
    <ligand>
        <name>(6S)-5,6,7,8-tetrahydrofolate</name>
        <dbReference type="ChEBI" id="CHEBI:57453"/>
    </ligand>
</feature>
<feature type="binding site" evidence="1">
    <location>
        <begin position="125"/>
        <end position="127"/>
    </location>
    <ligand>
        <name>(6S)-5,6,7,8-tetrahydrofolate</name>
        <dbReference type="ChEBI" id="CHEBI:57453"/>
    </ligand>
</feature>
<feature type="binding site" evidence="1">
    <location>
        <begin position="355"/>
        <end position="357"/>
    </location>
    <ligand>
        <name>(6S)-5,6,7,8-tetrahydrofolate</name>
        <dbReference type="ChEBI" id="CHEBI:57453"/>
    </ligand>
</feature>
<feature type="site" description="Plays an important role in substrate specificity" evidence="1">
    <location>
        <position position="228"/>
    </location>
</feature>
<feature type="modified residue" description="N6-(pyridoxal phosphate)lysine" evidence="1">
    <location>
        <position position="229"/>
    </location>
</feature>
<name>GLYA_PROMH</name>
<proteinExistence type="inferred from homology"/>
<gene>
    <name evidence="1" type="primary">glyA</name>
    <name type="ordered locus">PMI1867</name>
</gene>
<protein>
    <recommendedName>
        <fullName evidence="1">Serine hydroxymethyltransferase</fullName>
        <shortName evidence="1">SHMT</shortName>
        <shortName evidence="1">Serine methylase</shortName>
        <ecNumber evidence="1">2.1.2.1</ecNumber>
    </recommendedName>
</protein>